<name>TRHP_ECOLI</name>
<organism>
    <name type="scientific">Escherichia coli (strain K12)</name>
    <dbReference type="NCBI Taxonomy" id="83333"/>
    <lineage>
        <taxon>Bacteria</taxon>
        <taxon>Pseudomonadati</taxon>
        <taxon>Pseudomonadota</taxon>
        <taxon>Gammaproteobacteria</taxon>
        <taxon>Enterobacterales</taxon>
        <taxon>Enterobacteriaceae</taxon>
        <taxon>Escherichia</taxon>
    </lineage>
</organism>
<accession>P76403</accession>
<accession>O08007</accession>
<accession>O08010</accession>
<reference key="1">
    <citation type="journal article" date="1996" name="DNA Res.">
        <title>A 460-kb DNA sequence of the Escherichia coli K-12 genome corresponding to the 40.1-50.0 min region on the linkage map.</title>
        <authorList>
            <person name="Itoh T."/>
            <person name="Aiba H."/>
            <person name="Baba T."/>
            <person name="Fujita K."/>
            <person name="Hayashi K."/>
            <person name="Inada T."/>
            <person name="Isono K."/>
            <person name="Kasai H."/>
            <person name="Kimura S."/>
            <person name="Kitakawa M."/>
            <person name="Kitagawa M."/>
            <person name="Makino K."/>
            <person name="Miki T."/>
            <person name="Mizobuchi K."/>
            <person name="Mori H."/>
            <person name="Mori T."/>
            <person name="Motomura K."/>
            <person name="Nakade S."/>
            <person name="Nakamura Y."/>
            <person name="Nashimoto H."/>
            <person name="Nishio Y."/>
            <person name="Oshima T."/>
            <person name="Saito N."/>
            <person name="Sampei G."/>
            <person name="Seki Y."/>
            <person name="Sivasundaram S."/>
            <person name="Tagami H."/>
            <person name="Takeda J."/>
            <person name="Takemoto K."/>
            <person name="Wada C."/>
            <person name="Yamamoto Y."/>
            <person name="Horiuchi T."/>
        </authorList>
    </citation>
    <scope>NUCLEOTIDE SEQUENCE [LARGE SCALE GENOMIC DNA]</scope>
    <source>
        <strain>K12 / W3110 / ATCC 27325 / DSM 5911</strain>
    </source>
</reference>
<reference key="2">
    <citation type="journal article" date="1997" name="Science">
        <title>The complete genome sequence of Escherichia coli K-12.</title>
        <authorList>
            <person name="Blattner F.R."/>
            <person name="Plunkett G. III"/>
            <person name="Bloch C.A."/>
            <person name="Perna N.T."/>
            <person name="Burland V."/>
            <person name="Riley M."/>
            <person name="Collado-Vides J."/>
            <person name="Glasner J.D."/>
            <person name="Rode C.K."/>
            <person name="Mayhew G.F."/>
            <person name="Gregor J."/>
            <person name="Davis N.W."/>
            <person name="Kirkpatrick H.A."/>
            <person name="Goeden M.A."/>
            <person name="Rose D.J."/>
            <person name="Mau B."/>
            <person name="Shao Y."/>
        </authorList>
    </citation>
    <scope>NUCLEOTIDE SEQUENCE [LARGE SCALE GENOMIC DNA]</scope>
    <source>
        <strain>K12 / MG1655 / ATCC 47076</strain>
    </source>
</reference>
<reference key="3">
    <citation type="journal article" date="2006" name="Mol. Syst. Biol.">
        <title>Highly accurate genome sequences of Escherichia coli K-12 strains MG1655 and W3110.</title>
        <authorList>
            <person name="Hayashi K."/>
            <person name="Morooka N."/>
            <person name="Yamamoto Y."/>
            <person name="Fujita K."/>
            <person name="Isono K."/>
            <person name="Choi S."/>
            <person name="Ohtsubo E."/>
            <person name="Baba T."/>
            <person name="Wanner B.L."/>
            <person name="Mori H."/>
            <person name="Horiuchi T."/>
        </authorList>
    </citation>
    <scope>NUCLEOTIDE SEQUENCE [LARGE SCALE GENOMIC DNA]</scope>
    <source>
        <strain>K12 / W3110 / ATCC 27325 / DSM 5911</strain>
    </source>
</reference>
<reference key="4">
    <citation type="journal article" date="2019" name="Nat. Commun.">
        <title>Dual pathways of tRNA hydroxylation ensure efficient translation by expanding decoding capability.</title>
        <authorList>
            <person name="Sakai Y."/>
            <person name="Kimura S."/>
            <person name="Suzuki T."/>
        </authorList>
    </citation>
    <scope>FUNCTION</scope>
    <scope>DISRUPTION PHENOTYPE</scope>
    <scope>MUTAGENESIS OF GLU-162; HIS-166; CYS-170; CYS-177; CYS-193 AND CYS-197</scope>
</reference>
<comment type="function">
    <text evidence="1">Involved in prephenate-dependent formation of 5-hydroxyuridine (ho5U) modification at position 34 in tRNAs, the first step in 5-carboxymethoxyuridine (cmo5U) biosynthesis (PubMed:31253794). Involved differently in ho5U formation in each tRNA; tRNA(Leu3) and tRNA(Pro3) are major targets of TrhP (PubMed:31253794).</text>
</comment>
<comment type="disruption phenotype">
    <text evidence="1">Deletion mutant cells display reduced 5-methoxycarbonylmethoxyuridine (mcmo5U) formation in tRNA(Ala1), tRNA(Ser1) and tRNA(Thr4) (PubMed:31253794). Reduced 5-carboxymethoxyuridine (cmo5U) formation in tRNA(Val1) (PubMed:31253794). Strongly reduced cmo5U formation in tRNA(Leu3) and tRNA(Pro3) (PubMed:31253794). Cells lacking both trhP and trhO show complete absence of 5-carboxymethoxyuridine (cmo5U) modification in tRNAs; cells display a temperature-sensitive phenotype and decode codons ending in G (GCG and UCG) less efficiently than the wild-type strain (PubMed:31253794).</text>
</comment>
<comment type="similarity">
    <text evidence="3">Belongs to the peptidase U32 family.</text>
</comment>
<feature type="chain" id="PRO_0000079184" description="tRNA hydroxylation protein P">
    <location>
        <begin position="1"/>
        <end position="453"/>
    </location>
</feature>
<feature type="mutagenesis site" description="Reduced 5-carboxymethoxyuridine formation in tRNAs." evidence="1">
    <original>E</original>
    <variation>A</variation>
    <location>
        <position position="162"/>
    </location>
</feature>
<feature type="mutagenesis site" description="Reduced 5-carboxymethoxyuridine formation in tRNAs." evidence="1">
    <original>H</original>
    <variation>A</variation>
    <location>
        <position position="166"/>
    </location>
</feature>
<feature type="mutagenesis site" description="Reduced 5-carboxymethoxyuridine formation in tRNAs." evidence="1">
    <original>C</original>
    <variation>A</variation>
    <location>
        <position position="170"/>
    </location>
</feature>
<feature type="mutagenesis site" description="Reduced 5-carboxymethoxyuridine formation in tRNAs." evidence="1">
    <original>C</original>
    <variation>A</variation>
    <location>
        <position position="177"/>
    </location>
</feature>
<feature type="mutagenesis site" description="Reduced 5-carboxymethoxyuridine formation in tRNAs." evidence="1">
    <original>C</original>
    <variation>A</variation>
    <location>
        <position position="193"/>
    </location>
</feature>
<feature type="mutagenesis site" description="Reduced 5-carboxymethoxyuridine formation in tRNAs." evidence="1">
    <original>C</original>
    <variation>A</variation>
    <location>
        <position position="197"/>
    </location>
</feature>
<dbReference type="EC" id="3.4.-.-" evidence="3"/>
<dbReference type="EMBL" id="U00096">
    <property type="protein sequence ID" value="AAC75142.1"/>
    <property type="molecule type" value="Genomic_DNA"/>
</dbReference>
<dbReference type="EMBL" id="AP009048">
    <property type="protein sequence ID" value="BAA15936.1"/>
    <property type="molecule type" value="Genomic_DNA"/>
</dbReference>
<dbReference type="PIR" id="H64974">
    <property type="entry name" value="H64974"/>
</dbReference>
<dbReference type="RefSeq" id="NP_416585.1">
    <property type="nucleotide sequence ID" value="NC_000913.3"/>
</dbReference>
<dbReference type="RefSeq" id="WP_000476011.1">
    <property type="nucleotide sequence ID" value="NZ_STEB01000002.1"/>
</dbReference>
<dbReference type="SMR" id="P76403"/>
<dbReference type="BioGRID" id="4263508">
    <property type="interactions" value="52"/>
</dbReference>
<dbReference type="DIP" id="DIP-11887N"/>
<dbReference type="FunCoup" id="P76403">
    <property type="interactions" value="199"/>
</dbReference>
<dbReference type="IntAct" id="P76403">
    <property type="interactions" value="8"/>
</dbReference>
<dbReference type="STRING" id="511145.b2081"/>
<dbReference type="MEROPS" id="U32.002"/>
<dbReference type="jPOST" id="P76403"/>
<dbReference type="PaxDb" id="511145-b2081"/>
<dbReference type="EnsemblBacteria" id="AAC75142">
    <property type="protein sequence ID" value="AAC75142"/>
    <property type="gene ID" value="b2081"/>
</dbReference>
<dbReference type="GeneID" id="946609"/>
<dbReference type="KEGG" id="ecj:JW2066"/>
<dbReference type="KEGG" id="eco:b2081"/>
<dbReference type="KEGG" id="ecoc:C3026_11700"/>
<dbReference type="PATRIC" id="fig|511145.12.peg.2159"/>
<dbReference type="EchoBASE" id="EB3813"/>
<dbReference type="eggNOG" id="COG0826">
    <property type="taxonomic scope" value="Bacteria"/>
</dbReference>
<dbReference type="HOGENOM" id="CLU_011540_0_2_6"/>
<dbReference type="InParanoid" id="P76403"/>
<dbReference type="OMA" id="QNHQTAI"/>
<dbReference type="OrthoDB" id="9807498at2"/>
<dbReference type="PhylomeDB" id="P76403"/>
<dbReference type="BioCyc" id="EcoCyc:G7118-MONOMER"/>
<dbReference type="PRO" id="PR:P76403"/>
<dbReference type="Proteomes" id="UP000000625">
    <property type="component" value="Chromosome"/>
</dbReference>
<dbReference type="GO" id="GO:0005829">
    <property type="term" value="C:cytosol"/>
    <property type="evidence" value="ECO:0000314"/>
    <property type="project" value="EcoCyc"/>
</dbReference>
<dbReference type="GO" id="GO:0008233">
    <property type="term" value="F:peptidase activity"/>
    <property type="evidence" value="ECO:0007669"/>
    <property type="project" value="UniProtKB-KW"/>
</dbReference>
<dbReference type="GO" id="GO:0006508">
    <property type="term" value="P:proteolysis"/>
    <property type="evidence" value="ECO:0007669"/>
    <property type="project" value="UniProtKB-KW"/>
</dbReference>
<dbReference type="GO" id="GO:0006400">
    <property type="term" value="P:tRNA modification"/>
    <property type="evidence" value="ECO:0000314"/>
    <property type="project" value="UniProtKB"/>
</dbReference>
<dbReference type="GO" id="GO:0002098">
    <property type="term" value="P:tRNA wobble uridine modification"/>
    <property type="evidence" value="ECO:0000315"/>
    <property type="project" value="EcoCyc"/>
</dbReference>
<dbReference type="FunFam" id="2.40.30.10:FF:000039">
    <property type="entry name" value="U32 family peptidase"/>
    <property type="match status" value="1"/>
</dbReference>
<dbReference type="Gene3D" id="2.40.30.10">
    <property type="entry name" value="Translation factors"/>
    <property type="match status" value="1"/>
</dbReference>
<dbReference type="InterPro" id="IPR001539">
    <property type="entry name" value="Peptidase_U32"/>
</dbReference>
<dbReference type="InterPro" id="IPR032525">
    <property type="entry name" value="Peptidase_U32_C"/>
</dbReference>
<dbReference type="InterPro" id="IPR051454">
    <property type="entry name" value="RNA/ubiquinone_mod_enzymes"/>
</dbReference>
<dbReference type="NCBIfam" id="NF011996">
    <property type="entry name" value="PRK15452.1"/>
    <property type="match status" value="1"/>
</dbReference>
<dbReference type="PANTHER" id="PTHR30217">
    <property type="entry name" value="PEPTIDASE U32 FAMILY"/>
    <property type="match status" value="1"/>
</dbReference>
<dbReference type="PANTHER" id="PTHR30217:SF6">
    <property type="entry name" value="TRNA HYDROXYLATION PROTEIN P"/>
    <property type="match status" value="1"/>
</dbReference>
<dbReference type="Pfam" id="PF01136">
    <property type="entry name" value="Peptidase_U32"/>
    <property type="match status" value="1"/>
</dbReference>
<dbReference type="Pfam" id="PF16325">
    <property type="entry name" value="Peptidase_U32_C"/>
    <property type="match status" value="1"/>
</dbReference>
<dbReference type="PROSITE" id="PS01276">
    <property type="entry name" value="PEPTIDASE_U32"/>
    <property type="match status" value="1"/>
</dbReference>
<protein>
    <recommendedName>
        <fullName evidence="2">tRNA hydroxylation protein P</fullName>
        <ecNumber evidence="3">3.4.-.-</ecNumber>
    </recommendedName>
</protein>
<keyword id="KW-0378">Hydrolase</keyword>
<keyword id="KW-0645">Protease</keyword>
<keyword id="KW-1185">Reference proteome</keyword>
<keyword id="KW-0819">tRNA processing</keyword>
<evidence type="ECO:0000269" key="1">
    <source>
    </source>
</evidence>
<evidence type="ECO:0000303" key="2">
    <source>
    </source>
</evidence>
<evidence type="ECO:0000305" key="3"/>
<gene>
    <name evidence="2" type="primary">trhP</name>
    <name type="synonym">yegQ</name>
    <name type="ordered locus">b2081</name>
    <name type="ordered locus">JW2066</name>
</gene>
<sequence>MFKPELLSPAGTLKNMRYAFAYGADAVYAGQPRYSLRVRNNEFNHENLQLGINEAHALGKKFYVVVNIAPHNAKLKTFIRDLKPVVEMGPDALIMSDPGLIMLVREHFPEMPIHLSVQANAVNWATVKFWQQMGLTRVILSRELSLEEIEEIRNQVPDMEIEIFVHGALCMAYSGRCLLSGYINKRDPNQGTCTNACRWEYNVQEGKEDDVGNIVHKYEPIPVQNVEPTLGIGAPTDKVFMIEEAQRPGEYMTAFEDEHGTYIMNSKDLRAIAHVERLTKMGVHSLKIEGRTKSFYYCARTAQVYRKAIDDAAAGKPFDTSLLETLEGLAHRGYTEGFLRRHTHDDYQNYEYGYSVSDRQQFVGEFTGERKGDLAAVAVKNKFSVGDSLELMTPQGNINFTLEHMENAKGEAMPIAPGDGYTVWLPVPQDLELNYALLMRNFSGETTRNPHGK</sequence>
<proteinExistence type="evidence at protein level"/>